<sequence>MKNLIAELLFKLAQKEEESKELCAQVEALEIIVTAMLRNMAQNDQQRLIDQVEGALYEVKPDASIPDDDTELLRDYVKKLLRHPRQ</sequence>
<feature type="chain" id="PRO_0000337854" description="Anti-adapter protein IraP">
    <location>
        <begin position="1"/>
        <end position="86"/>
    </location>
</feature>
<feature type="coiled-coil region" evidence="1">
    <location>
        <begin position="1"/>
        <end position="36"/>
    </location>
</feature>
<protein>
    <recommendedName>
        <fullName evidence="1">Anti-adapter protein IraP</fullName>
    </recommendedName>
</protein>
<organism>
    <name type="scientific">Escherichia coli O6:H1 (strain CFT073 / ATCC 700928 / UPEC)</name>
    <dbReference type="NCBI Taxonomy" id="199310"/>
    <lineage>
        <taxon>Bacteria</taxon>
        <taxon>Pseudomonadati</taxon>
        <taxon>Pseudomonadota</taxon>
        <taxon>Gammaproteobacteria</taxon>
        <taxon>Enterobacterales</taxon>
        <taxon>Enterobacteriaceae</taxon>
        <taxon>Escherichia</taxon>
    </lineage>
</organism>
<reference key="1">
    <citation type="journal article" date="2002" name="Proc. Natl. Acad. Sci. U.S.A.">
        <title>Extensive mosaic structure revealed by the complete genome sequence of uropathogenic Escherichia coli.</title>
        <authorList>
            <person name="Welch R.A."/>
            <person name="Burland V."/>
            <person name="Plunkett G. III"/>
            <person name="Redford P."/>
            <person name="Roesch P."/>
            <person name="Rasko D."/>
            <person name="Buckles E.L."/>
            <person name="Liou S.-R."/>
            <person name="Boutin A."/>
            <person name="Hackett J."/>
            <person name="Stroud D."/>
            <person name="Mayhew G.F."/>
            <person name="Rose D.J."/>
            <person name="Zhou S."/>
            <person name="Schwartz D.C."/>
            <person name="Perna N.T."/>
            <person name="Mobley H.L.T."/>
            <person name="Donnenberg M.S."/>
            <person name="Blattner F.R."/>
        </authorList>
    </citation>
    <scope>NUCLEOTIDE SEQUENCE [LARGE SCALE GENOMIC DNA]</scope>
    <source>
        <strain>CFT073 / ATCC 700928 / UPEC</strain>
    </source>
</reference>
<name>IRAP_ECOL6</name>
<accession>Q8FKE1</accession>
<comment type="function">
    <text evidence="1">Inhibits RpoS proteolysis by regulating RssB activity, thereby increasing the stability of the sigma stress factor RpoS especially during phosphate starvation, but also in stationary phase and during nitrogen starvation. Its effect on RpoS stability is due to its interaction with RssB, which probably blocks the interaction of RssB with RpoS, and the consequent delivery of the RssB-RpoS complex to the ClpXP protein degradation pathway.</text>
</comment>
<comment type="subunit">
    <text evidence="1">Interacts with RssB.</text>
</comment>
<comment type="subcellular location">
    <subcellularLocation>
        <location evidence="1">Cytoplasm</location>
    </subcellularLocation>
</comment>
<comment type="similarity">
    <text evidence="1">Belongs to the IraP family.</text>
</comment>
<proteinExistence type="inferred from homology"/>
<gene>
    <name evidence="1" type="primary">iraP</name>
    <name type="ordered locus">c0489</name>
</gene>
<evidence type="ECO:0000255" key="1">
    <source>
        <dbReference type="HAMAP-Rule" id="MF_01198"/>
    </source>
</evidence>
<dbReference type="EMBL" id="AE014075">
    <property type="protein sequence ID" value="AAN78967.1"/>
    <property type="molecule type" value="Genomic_DNA"/>
</dbReference>
<dbReference type="RefSeq" id="WP_000792973.1">
    <property type="nucleotide sequence ID" value="NZ_CP051263.1"/>
</dbReference>
<dbReference type="SMR" id="Q8FKE1"/>
<dbReference type="STRING" id="199310.c0489"/>
<dbReference type="KEGG" id="ecc:c0489"/>
<dbReference type="eggNOG" id="ENOG5032SF1">
    <property type="taxonomic scope" value="Bacteria"/>
</dbReference>
<dbReference type="HOGENOM" id="CLU_169517_0_0_6"/>
<dbReference type="BioCyc" id="ECOL199310:C0489-MONOMER"/>
<dbReference type="Proteomes" id="UP000001410">
    <property type="component" value="Chromosome"/>
</dbReference>
<dbReference type="GO" id="GO:0005737">
    <property type="term" value="C:cytoplasm"/>
    <property type="evidence" value="ECO:0007669"/>
    <property type="project" value="UniProtKB-SubCell"/>
</dbReference>
<dbReference type="GO" id="GO:0009267">
    <property type="term" value="P:cellular response to starvation"/>
    <property type="evidence" value="ECO:0007669"/>
    <property type="project" value="UniProtKB-UniRule"/>
</dbReference>
<dbReference type="HAMAP" id="MF_01198">
    <property type="entry name" value="Anti_adapt_IraP"/>
    <property type="match status" value="1"/>
</dbReference>
<dbReference type="InterPro" id="IPR019732">
    <property type="entry name" value="SigmaS_Anti-adapt_IraP"/>
</dbReference>
<dbReference type="NCBIfam" id="NF007598">
    <property type="entry name" value="PRK10244.1"/>
    <property type="match status" value="1"/>
</dbReference>
<dbReference type="Pfam" id="PF10796">
    <property type="entry name" value="Anti-adapt_IraP"/>
    <property type="match status" value="1"/>
</dbReference>
<keyword id="KW-0175">Coiled coil</keyword>
<keyword id="KW-0963">Cytoplasm</keyword>
<keyword id="KW-1185">Reference proteome</keyword>
<keyword id="KW-0346">Stress response</keyword>